<proteinExistence type="inferred from homology"/>
<comment type="function">
    <text evidence="1">Bifunctional enzyme with both catalase and broad-spectrum peroxidase activity.</text>
</comment>
<comment type="catalytic activity">
    <reaction evidence="1">
        <text>H2O2 + AH2 = A + 2 H2O</text>
        <dbReference type="Rhea" id="RHEA:30275"/>
        <dbReference type="ChEBI" id="CHEBI:13193"/>
        <dbReference type="ChEBI" id="CHEBI:15377"/>
        <dbReference type="ChEBI" id="CHEBI:16240"/>
        <dbReference type="ChEBI" id="CHEBI:17499"/>
        <dbReference type="EC" id="1.11.1.21"/>
    </reaction>
</comment>
<comment type="catalytic activity">
    <reaction evidence="1">
        <text>2 H2O2 = O2 + 2 H2O</text>
        <dbReference type="Rhea" id="RHEA:20309"/>
        <dbReference type="ChEBI" id="CHEBI:15377"/>
        <dbReference type="ChEBI" id="CHEBI:15379"/>
        <dbReference type="ChEBI" id="CHEBI:16240"/>
        <dbReference type="EC" id="1.11.1.21"/>
    </reaction>
</comment>
<comment type="cofactor">
    <cofactor evidence="1">
        <name>heme b</name>
        <dbReference type="ChEBI" id="CHEBI:60344"/>
    </cofactor>
    <text evidence="1">Binds 1 heme b (iron(II)-protoporphyrin IX) group per dimer.</text>
</comment>
<comment type="subunit">
    <text evidence="1">Homodimer or homotetramer.</text>
</comment>
<comment type="PTM">
    <text evidence="1">Formation of the three residue Trp-Tyr-Met cross-link is important for the catalase, but not the peroxidase activity of the enzyme.</text>
</comment>
<comment type="similarity">
    <text evidence="1">Belongs to the peroxidase family. Peroxidase/catalase subfamily.</text>
</comment>
<sequence>MSENGKCPVTGKTSKPVAGGGTSNQDWWPNQLNLNILHQQSSKSNPMGGDFNYAEEFKKLDLKAVKEDLYTLMTDSQEWWPADYGHYGPLFIRMAWHSAGTYRMGDGRGGAGSGSQRLAPLNSWPDNVNLDKARRLLWPIKQKYGKRISWADLMVLAGNCAIESMGLPTFGFAGGREDVWEPEQDVYWGSEEEWLATSDKPKSRYSGERDLENPLAAVQMGLIYVNPEGPDGNPDPIASGKDVRETFARMAMNDEETVALVAGGHTFGKCHGAGDAALVGPEPEAAPLEEMGLGWKSSHGRGKGGDTISSGIEGAWKPRPTTWDMGYLKVLFKYDWELVKSPAGANQWLAKDVDDEDMVVDAHDPDKKHRPMMTTADLSLKFDPIYEPIARRYLENPEEFADAFARAWFKLTHRDMGPRARYLGPEVPEEDLIWQDPIPAVDHELIDDKDIADLKAKILASGLSVSQLVTTAWASASTFRGSDNRGGANGARIRFAPQKDWAVNQPAELQKVLQALEGIQKDFNAGQSGGKKVSLADLIVLGGCAGVEKAAQNAGADAAVPFAPGRMDALEEQTDGDSFSVLEPKADGFRNFQKAKFAVKAEELLVDRAQLLTLTAPEMTVLVGGLRMLGANYGNSKHGVFTDKSETLTNDFFVNLLDMGTVWKPSANDEDVFEGSDRKTGALKWTGTRVDLVFGSNSQLRAIAEVYGCEDGQEKFVQDFVAAWDKVMSLDRFDLA</sequence>
<gene>
    <name evidence="1" type="primary">katG</name>
    <name type="ordered locus">Dalk_5031</name>
</gene>
<keyword id="KW-0349">Heme</keyword>
<keyword id="KW-0376">Hydrogen peroxide</keyword>
<keyword id="KW-0408">Iron</keyword>
<keyword id="KW-0479">Metal-binding</keyword>
<keyword id="KW-0560">Oxidoreductase</keyword>
<keyword id="KW-0575">Peroxidase</keyword>
<keyword id="KW-1185">Reference proteome</keyword>
<feature type="chain" id="PRO_1000189071" description="Catalase-peroxidase">
    <location>
        <begin position="1"/>
        <end position="736"/>
    </location>
</feature>
<feature type="region of interest" description="Disordered" evidence="2">
    <location>
        <begin position="1"/>
        <end position="25"/>
    </location>
</feature>
<feature type="region of interest" description="Disordered" evidence="2">
    <location>
        <begin position="294"/>
        <end position="313"/>
    </location>
</feature>
<feature type="active site" description="Proton acceptor" evidence="1">
    <location>
        <position position="97"/>
    </location>
</feature>
<feature type="binding site" description="axial binding residue" evidence="1">
    <location>
        <position position="265"/>
    </location>
    <ligand>
        <name>heme b</name>
        <dbReference type="ChEBI" id="CHEBI:60344"/>
    </ligand>
    <ligandPart>
        <name>Fe</name>
        <dbReference type="ChEBI" id="CHEBI:18248"/>
    </ligandPart>
</feature>
<feature type="site" description="Transition state stabilizer" evidence="1">
    <location>
        <position position="93"/>
    </location>
</feature>
<feature type="cross-link" description="Tryptophyl-tyrosyl-methioninium (Trp-Tyr) (with M-250)" evidence="1">
    <location>
        <begin position="96"/>
        <end position="224"/>
    </location>
</feature>
<feature type="cross-link" description="Tryptophyl-tyrosyl-methioninium (Tyr-Met) (with W-96)" evidence="1">
    <location>
        <begin position="224"/>
        <end position="250"/>
    </location>
</feature>
<dbReference type="EC" id="1.11.1.21" evidence="1"/>
<dbReference type="EMBL" id="CP001322">
    <property type="protein sequence ID" value="ACL06702.1"/>
    <property type="molecule type" value="Genomic_DNA"/>
</dbReference>
<dbReference type="RefSeq" id="WP_015949739.1">
    <property type="nucleotide sequence ID" value="NC_011768.1"/>
</dbReference>
<dbReference type="SMR" id="B8FDS1"/>
<dbReference type="KEGG" id="dal:Dalk_5031"/>
<dbReference type="eggNOG" id="COG0376">
    <property type="taxonomic scope" value="Bacteria"/>
</dbReference>
<dbReference type="HOGENOM" id="CLU_025424_2_0_7"/>
<dbReference type="Proteomes" id="UP000000739">
    <property type="component" value="Chromosome"/>
</dbReference>
<dbReference type="GO" id="GO:0005829">
    <property type="term" value="C:cytosol"/>
    <property type="evidence" value="ECO:0007669"/>
    <property type="project" value="TreeGrafter"/>
</dbReference>
<dbReference type="GO" id="GO:0004096">
    <property type="term" value="F:catalase activity"/>
    <property type="evidence" value="ECO:0007669"/>
    <property type="project" value="UniProtKB-UniRule"/>
</dbReference>
<dbReference type="GO" id="GO:0020037">
    <property type="term" value="F:heme binding"/>
    <property type="evidence" value="ECO:0007669"/>
    <property type="project" value="InterPro"/>
</dbReference>
<dbReference type="GO" id="GO:0046872">
    <property type="term" value="F:metal ion binding"/>
    <property type="evidence" value="ECO:0007669"/>
    <property type="project" value="UniProtKB-KW"/>
</dbReference>
<dbReference type="GO" id="GO:0070301">
    <property type="term" value="P:cellular response to hydrogen peroxide"/>
    <property type="evidence" value="ECO:0007669"/>
    <property type="project" value="TreeGrafter"/>
</dbReference>
<dbReference type="GO" id="GO:0042744">
    <property type="term" value="P:hydrogen peroxide catabolic process"/>
    <property type="evidence" value="ECO:0007669"/>
    <property type="project" value="UniProtKB-KW"/>
</dbReference>
<dbReference type="CDD" id="cd00649">
    <property type="entry name" value="catalase_peroxidase_1"/>
    <property type="match status" value="1"/>
</dbReference>
<dbReference type="CDD" id="cd08200">
    <property type="entry name" value="catalase_peroxidase_2"/>
    <property type="match status" value="1"/>
</dbReference>
<dbReference type="FunFam" id="1.10.420.10:FF:000002">
    <property type="entry name" value="Catalase-peroxidase"/>
    <property type="match status" value="1"/>
</dbReference>
<dbReference type="FunFam" id="1.10.420.10:FF:000004">
    <property type="entry name" value="Catalase-peroxidase"/>
    <property type="match status" value="1"/>
</dbReference>
<dbReference type="FunFam" id="1.10.520.10:FF:000002">
    <property type="entry name" value="Catalase-peroxidase"/>
    <property type="match status" value="1"/>
</dbReference>
<dbReference type="Gene3D" id="1.10.520.10">
    <property type="match status" value="2"/>
</dbReference>
<dbReference type="Gene3D" id="1.10.420.10">
    <property type="entry name" value="Peroxidase, domain 2"/>
    <property type="match status" value="2"/>
</dbReference>
<dbReference type="HAMAP" id="MF_01961">
    <property type="entry name" value="Catal_peroxid"/>
    <property type="match status" value="1"/>
</dbReference>
<dbReference type="InterPro" id="IPR000763">
    <property type="entry name" value="Catalase_peroxidase"/>
</dbReference>
<dbReference type="InterPro" id="IPR002016">
    <property type="entry name" value="Haem_peroxidase"/>
</dbReference>
<dbReference type="InterPro" id="IPR010255">
    <property type="entry name" value="Haem_peroxidase_sf"/>
</dbReference>
<dbReference type="InterPro" id="IPR019794">
    <property type="entry name" value="Peroxidases_AS"/>
</dbReference>
<dbReference type="InterPro" id="IPR019793">
    <property type="entry name" value="Peroxidases_heam-ligand_BS"/>
</dbReference>
<dbReference type="NCBIfam" id="TIGR00198">
    <property type="entry name" value="cat_per_HPI"/>
    <property type="match status" value="1"/>
</dbReference>
<dbReference type="NCBIfam" id="NF011635">
    <property type="entry name" value="PRK15061.1"/>
    <property type="match status" value="1"/>
</dbReference>
<dbReference type="PANTHER" id="PTHR30555:SF0">
    <property type="entry name" value="CATALASE-PEROXIDASE"/>
    <property type="match status" value="1"/>
</dbReference>
<dbReference type="PANTHER" id="PTHR30555">
    <property type="entry name" value="HYDROPEROXIDASE I, BIFUNCTIONAL CATALASE-PEROXIDASE"/>
    <property type="match status" value="1"/>
</dbReference>
<dbReference type="Pfam" id="PF00141">
    <property type="entry name" value="peroxidase"/>
    <property type="match status" value="2"/>
</dbReference>
<dbReference type="PRINTS" id="PR00460">
    <property type="entry name" value="BPEROXIDASE"/>
</dbReference>
<dbReference type="PRINTS" id="PR00458">
    <property type="entry name" value="PEROXIDASE"/>
</dbReference>
<dbReference type="SUPFAM" id="SSF48113">
    <property type="entry name" value="Heme-dependent peroxidases"/>
    <property type="match status" value="2"/>
</dbReference>
<dbReference type="PROSITE" id="PS00435">
    <property type="entry name" value="PEROXIDASE_1"/>
    <property type="match status" value="1"/>
</dbReference>
<dbReference type="PROSITE" id="PS00436">
    <property type="entry name" value="PEROXIDASE_2"/>
    <property type="match status" value="1"/>
</dbReference>
<dbReference type="PROSITE" id="PS50873">
    <property type="entry name" value="PEROXIDASE_4"/>
    <property type="match status" value="1"/>
</dbReference>
<reference key="1">
    <citation type="journal article" date="2012" name="Environ. Microbiol.">
        <title>The genome sequence of Desulfatibacillum alkenivorans AK-01: a blueprint for anaerobic alkane oxidation.</title>
        <authorList>
            <person name="Callaghan A.V."/>
            <person name="Morris B.E."/>
            <person name="Pereira I.A."/>
            <person name="McInerney M.J."/>
            <person name="Austin R.N."/>
            <person name="Groves J.T."/>
            <person name="Kukor J.J."/>
            <person name="Suflita J.M."/>
            <person name="Young L.Y."/>
            <person name="Zylstra G.J."/>
            <person name="Wawrik B."/>
        </authorList>
    </citation>
    <scope>NUCLEOTIDE SEQUENCE [LARGE SCALE GENOMIC DNA]</scope>
    <source>
        <strain>AK-01</strain>
    </source>
</reference>
<protein>
    <recommendedName>
        <fullName evidence="1">Catalase-peroxidase</fullName>
        <shortName evidence="1">CP</shortName>
        <ecNumber evidence="1">1.11.1.21</ecNumber>
    </recommendedName>
    <alternativeName>
        <fullName evidence="1">Peroxidase/catalase</fullName>
    </alternativeName>
</protein>
<evidence type="ECO:0000255" key="1">
    <source>
        <dbReference type="HAMAP-Rule" id="MF_01961"/>
    </source>
</evidence>
<evidence type="ECO:0000256" key="2">
    <source>
        <dbReference type="SAM" id="MobiDB-lite"/>
    </source>
</evidence>
<accession>B8FDS1</accession>
<name>KATG_DESAL</name>
<organism>
    <name type="scientific">Desulfatibacillum aliphaticivorans</name>
    <dbReference type="NCBI Taxonomy" id="218208"/>
    <lineage>
        <taxon>Bacteria</taxon>
        <taxon>Pseudomonadati</taxon>
        <taxon>Thermodesulfobacteriota</taxon>
        <taxon>Desulfobacteria</taxon>
        <taxon>Desulfobacterales</taxon>
        <taxon>Desulfatibacillaceae</taxon>
        <taxon>Desulfatibacillum</taxon>
    </lineage>
</organism>